<feature type="chain" id="PRO_0000388477" description="Sulfite reductase [NADPH] hemoprotein beta-component">
    <location>
        <begin position="1"/>
        <end position="572"/>
    </location>
</feature>
<feature type="binding site" evidence="1">
    <location>
        <position position="436"/>
    </location>
    <ligand>
        <name>[4Fe-4S] cluster</name>
        <dbReference type="ChEBI" id="CHEBI:49883"/>
    </ligand>
</feature>
<feature type="binding site" evidence="1">
    <location>
        <position position="442"/>
    </location>
    <ligand>
        <name>[4Fe-4S] cluster</name>
        <dbReference type="ChEBI" id="CHEBI:49883"/>
    </ligand>
</feature>
<feature type="binding site" evidence="1">
    <location>
        <position position="481"/>
    </location>
    <ligand>
        <name>[4Fe-4S] cluster</name>
        <dbReference type="ChEBI" id="CHEBI:49883"/>
    </ligand>
</feature>
<feature type="binding site" evidence="1">
    <location>
        <position position="485"/>
    </location>
    <ligand>
        <name>[4Fe-4S] cluster</name>
        <dbReference type="ChEBI" id="CHEBI:49883"/>
    </ligand>
</feature>
<feature type="binding site" description="axial binding residue" evidence="1">
    <location>
        <position position="485"/>
    </location>
    <ligand>
        <name>siroheme</name>
        <dbReference type="ChEBI" id="CHEBI:60052"/>
    </ligand>
    <ligandPart>
        <name>Fe</name>
        <dbReference type="ChEBI" id="CHEBI:18248"/>
    </ligandPart>
</feature>
<comment type="function">
    <text evidence="1">Component of the sulfite reductase complex that catalyzes the 6-electron reduction of sulfite to sulfide. This is one of several activities required for the biosynthesis of L-cysteine from sulfate.</text>
</comment>
<comment type="catalytic activity">
    <reaction evidence="1">
        <text>hydrogen sulfide + 3 NADP(+) + 3 H2O = sulfite + 3 NADPH + 4 H(+)</text>
        <dbReference type="Rhea" id="RHEA:13801"/>
        <dbReference type="ChEBI" id="CHEBI:15377"/>
        <dbReference type="ChEBI" id="CHEBI:15378"/>
        <dbReference type="ChEBI" id="CHEBI:17359"/>
        <dbReference type="ChEBI" id="CHEBI:29919"/>
        <dbReference type="ChEBI" id="CHEBI:57783"/>
        <dbReference type="ChEBI" id="CHEBI:58349"/>
        <dbReference type="EC" id="1.8.1.2"/>
    </reaction>
</comment>
<comment type="cofactor">
    <cofactor evidence="1">
        <name>siroheme</name>
        <dbReference type="ChEBI" id="CHEBI:60052"/>
    </cofactor>
    <text evidence="1">Binds 1 siroheme per subunit.</text>
</comment>
<comment type="cofactor">
    <cofactor evidence="1">
        <name>[4Fe-4S] cluster</name>
        <dbReference type="ChEBI" id="CHEBI:49883"/>
    </cofactor>
    <text evidence="1">Binds 1 [4Fe-4S] cluster per subunit.</text>
</comment>
<comment type="pathway">
    <text evidence="1">Sulfur metabolism; hydrogen sulfide biosynthesis; hydrogen sulfide from sulfite (NADPH route): step 1/1.</text>
</comment>
<comment type="subunit">
    <text evidence="1">Alpha(8)-beta(8). The alpha component is a flavoprotein, the beta component is a hemoprotein.</text>
</comment>
<comment type="similarity">
    <text evidence="1">Belongs to the nitrite and sulfite reductase 4Fe-4S domain family.</text>
</comment>
<evidence type="ECO:0000255" key="1">
    <source>
        <dbReference type="HAMAP-Rule" id="MF_01540"/>
    </source>
</evidence>
<dbReference type="EC" id="1.8.1.2" evidence="1"/>
<dbReference type="EMBL" id="CP000813">
    <property type="protein sequence ID" value="ABV62450.1"/>
    <property type="molecule type" value="Genomic_DNA"/>
</dbReference>
<dbReference type="RefSeq" id="WP_012010177.1">
    <property type="nucleotide sequence ID" value="NC_009848.4"/>
</dbReference>
<dbReference type="SMR" id="A8FDY3"/>
<dbReference type="STRING" id="315750.BPUM_1778"/>
<dbReference type="GeneID" id="5621039"/>
<dbReference type="KEGG" id="bpu:BPUM_1778"/>
<dbReference type="eggNOG" id="COG0155">
    <property type="taxonomic scope" value="Bacteria"/>
</dbReference>
<dbReference type="HOGENOM" id="CLU_001975_3_2_9"/>
<dbReference type="OrthoDB" id="9803707at2"/>
<dbReference type="UniPathway" id="UPA00140">
    <property type="reaction ID" value="UER00207"/>
</dbReference>
<dbReference type="Proteomes" id="UP000001355">
    <property type="component" value="Chromosome"/>
</dbReference>
<dbReference type="GO" id="GO:0009337">
    <property type="term" value="C:sulfite reductase complex (NADPH)"/>
    <property type="evidence" value="ECO:0007669"/>
    <property type="project" value="InterPro"/>
</dbReference>
<dbReference type="GO" id="GO:0051539">
    <property type="term" value="F:4 iron, 4 sulfur cluster binding"/>
    <property type="evidence" value="ECO:0007669"/>
    <property type="project" value="UniProtKB-KW"/>
</dbReference>
<dbReference type="GO" id="GO:0020037">
    <property type="term" value="F:heme binding"/>
    <property type="evidence" value="ECO:0007669"/>
    <property type="project" value="InterPro"/>
</dbReference>
<dbReference type="GO" id="GO:0046872">
    <property type="term" value="F:metal ion binding"/>
    <property type="evidence" value="ECO:0007669"/>
    <property type="project" value="UniProtKB-KW"/>
</dbReference>
<dbReference type="GO" id="GO:0050661">
    <property type="term" value="F:NADP binding"/>
    <property type="evidence" value="ECO:0007669"/>
    <property type="project" value="InterPro"/>
</dbReference>
<dbReference type="GO" id="GO:0050311">
    <property type="term" value="F:sulfite reductase (ferredoxin) activity"/>
    <property type="evidence" value="ECO:0007669"/>
    <property type="project" value="TreeGrafter"/>
</dbReference>
<dbReference type="GO" id="GO:0004783">
    <property type="term" value="F:sulfite reductase (NADPH) activity"/>
    <property type="evidence" value="ECO:0007669"/>
    <property type="project" value="UniProtKB-UniRule"/>
</dbReference>
<dbReference type="GO" id="GO:0019344">
    <property type="term" value="P:cysteine biosynthetic process"/>
    <property type="evidence" value="ECO:0007669"/>
    <property type="project" value="UniProtKB-KW"/>
</dbReference>
<dbReference type="GO" id="GO:0070814">
    <property type="term" value="P:hydrogen sulfide biosynthetic process"/>
    <property type="evidence" value="ECO:0007669"/>
    <property type="project" value="UniProtKB-UniRule"/>
</dbReference>
<dbReference type="GO" id="GO:0000103">
    <property type="term" value="P:sulfate assimilation"/>
    <property type="evidence" value="ECO:0007669"/>
    <property type="project" value="UniProtKB-UniRule"/>
</dbReference>
<dbReference type="FunFam" id="3.30.413.10:FF:000003">
    <property type="entry name" value="Sulfite reductase [NADPH] hemoprotein beta-component"/>
    <property type="match status" value="1"/>
</dbReference>
<dbReference type="FunFam" id="3.30.413.10:FF:000004">
    <property type="entry name" value="Sulfite reductase [NADPH] hemoprotein beta-component"/>
    <property type="match status" value="1"/>
</dbReference>
<dbReference type="Gene3D" id="3.30.413.10">
    <property type="entry name" value="Sulfite Reductase Hemoprotein, domain 1"/>
    <property type="match status" value="2"/>
</dbReference>
<dbReference type="HAMAP" id="MF_01540">
    <property type="entry name" value="CysI"/>
    <property type="match status" value="1"/>
</dbReference>
<dbReference type="InterPro" id="IPR011786">
    <property type="entry name" value="CysI"/>
</dbReference>
<dbReference type="InterPro" id="IPR005117">
    <property type="entry name" value="NiRdtase/SiRdtase_haem-b_fer"/>
</dbReference>
<dbReference type="InterPro" id="IPR036136">
    <property type="entry name" value="Nit/Sulf_reduc_fer-like_dom_sf"/>
</dbReference>
<dbReference type="InterPro" id="IPR006067">
    <property type="entry name" value="NO2/SO3_Rdtase_4Fe4S_dom"/>
</dbReference>
<dbReference type="InterPro" id="IPR045169">
    <property type="entry name" value="NO2/SO3_Rdtase_4Fe4S_prot"/>
</dbReference>
<dbReference type="InterPro" id="IPR045854">
    <property type="entry name" value="NO2/SO3_Rdtase_4Fe4S_sf"/>
</dbReference>
<dbReference type="InterPro" id="IPR006066">
    <property type="entry name" value="NO2/SO3_Rdtase_FeS/sirohaem_BS"/>
</dbReference>
<dbReference type="NCBIfam" id="TIGR02041">
    <property type="entry name" value="CysI"/>
    <property type="match status" value="1"/>
</dbReference>
<dbReference type="NCBIfam" id="NF010029">
    <property type="entry name" value="PRK13504.1"/>
    <property type="match status" value="1"/>
</dbReference>
<dbReference type="PANTHER" id="PTHR11493:SF47">
    <property type="entry name" value="SULFITE REDUCTASE [NADPH] SUBUNIT BETA"/>
    <property type="match status" value="1"/>
</dbReference>
<dbReference type="PANTHER" id="PTHR11493">
    <property type="entry name" value="SULFITE REDUCTASE [NADPH] SUBUNIT BETA-RELATED"/>
    <property type="match status" value="1"/>
</dbReference>
<dbReference type="Pfam" id="PF01077">
    <property type="entry name" value="NIR_SIR"/>
    <property type="match status" value="1"/>
</dbReference>
<dbReference type="Pfam" id="PF03460">
    <property type="entry name" value="NIR_SIR_ferr"/>
    <property type="match status" value="2"/>
</dbReference>
<dbReference type="PRINTS" id="PR00397">
    <property type="entry name" value="SIROHAEM"/>
</dbReference>
<dbReference type="SUPFAM" id="SSF56014">
    <property type="entry name" value="Nitrite and sulphite reductase 4Fe-4S domain-like"/>
    <property type="match status" value="2"/>
</dbReference>
<dbReference type="SUPFAM" id="SSF55124">
    <property type="entry name" value="Nitrite/Sulfite reductase N-terminal domain-like"/>
    <property type="match status" value="2"/>
</dbReference>
<dbReference type="PROSITE" id="PS00365">
    <property type="entry name" value="NIR_SIR"/>
    <property type="match status" value="1"/>
</dbReference>
<proteinExistence type="inferred from homology"/>
<gene>
    <name evidence="1" type="primary">cysI</name>
    <name type="ordered locus">BPUM_1778</name>
</gene>
<reference key="1">
    <citation type="journal article" date="2007" name="PLoS ONE">
        <title>Paradoxical DNA repair and peroxide resistance gene conservation in Bacillus pumilus SAFR-032.</title>
        <authorList>
            <person name="Gioia J."/>
            <person name="Yerrapragada S."/>
            <person name="Qin X."/>
            <person name="Jiang H."/>
            <person name="Igboeli O.C."/>
            <person name="Muzny D."/>
            <person name="Dugan-Rocha S."/>
            <person name="Ding Y."/>
            <person name="Hawes A."/>
            <person name="Liu W."/>
            <person name="Perez L."/>
            <person name="Kovar C."/>
            <person name="Dinh H."/>
            <person name="Lee S."/>
            <person name="Nazareth L."/>
            <person name="Blyth P."/>
            <person name="Holder M."/>
            <person name="Buhay C."/>
            <person name="Tirumalai M.R."/>
            <person name="Liu Y."/>
            <person name="Dasgupta I."/>
            <person name="Bokhetache L."/>
            <person name="Fujita M."/>
            <person name="Karouia F."/>
            <person name="Eswara Moorthy P."/>
            <person name="Siefert J."/>
            <person name="Uzman A."/>
            <person name="Buzumbo P."/>
            <person name="Verma A."/>
            <person name="Zwiya H."/>
            <person name="McWilliams B.D."/>
            <person name="Olowu A."/>
            <person name="Clinkenbeard K.D."/>
            <person name="Newcombe D."/>
            <person name="Golebiewski L."/>
            <person name="Petrosino J.F."/>
            <person name="Nicholson W.L."/>
            <person name="Fox G.E."/>
            <person name="Venkateswaran K."/>
            <person name="Highlander S.K."/>
            <person name="Weinstock G.M."/>
        </authorList>
    </citation>
    <scope>NUCLEOTIDE SEQUENCE [LARGE SCALE GENOMIC DNA]</scope>
    <source>
        <strain>SAFR-032</strain>
    </source>
</reference>
<protein>
    <recommendedName>
        <fullName evidence="1">Sulfite reductase [NADPH] hemoprotein beta-component</fullName>
        <shortName evidence="1">SiR-HP</shortName>
        <shortName evidence="1">SiRHP</shortName>
        <ecNumber evidence="1">1.8.1.2</ecNumber>
    </recommendedName>
</protein>
<name>CYSI_BACP2</name>
<accession>A8FDY3</accession>
<keyword id="KW-0004">4Fe-4S</keyword>
<keyword id="KW-0028">Amino-acid biosynthesis</keyword>
<keyword id="KW-0198">Cysteine biosynthesis</keyword>
<keyword id="KW-0349">Heme</keyword>
<keyword id="KW-0408">Iron</keyword>
<keyword id="KW-0411">Iron-sulfur</keyword>
<keyword id="KW-0479">Metal-binding</keyword>
<keyword id="KW-0521">NADP</keyword>
<keyword id="KW-0560">Oxidoreductase</keyword>
<sequence>MVKTALTAPEGPPSDVEEIKEKSDYLRGTLKEVMLDPISAGIPDDDNRLMKHHGSYLQDDRDLRNERQKQKLEPAYQFMLRVRLPGGIATSKQWLVMDELAHKYGNGTLKLTTRETFQLHGILKWNMKKTIQDIHSTMLDTIAACGDVNRNVMCTSNPYQSEVHHDVYELAKKLSDDLLPQTRAYHEIWLDEEKVAATPDTEVEPMYGPLYLPRKFKIGVAVPPANDIDVFSQDLGFIAIIENEQLIGFNVAIGGGMGMTHGDTATYPQLAKVIGFCTPEQVVEIAKQVITIQRDYGNRSVRKNARFKYTVDRLGLENVKEELEGRLGFALLEARDYHFDHNGDRYGWVKGINGRWHYTMFVEGGRIIDYDDYPLMTGIREIAKIHSGDFRLTANQNLIIGNVTSHKKKQIEQLIQEFGLSDGQQHSALRRSSMACVALPTCGLAMAEAERYLPRLIDKIEEIVEENGLSDKEITIRMTGCPNGCARHALGEIGFIGKSPGKYNMYLGAAFDGSRLSKLYRENVGEEEILNELGSLLPRYAKEREEKEHFGDFVVRAGIVKETTDGTNFHVQ</sequence>
<organism>
    <name type="scientific">Bacillus pumilus (strain SAFR-032)</name>
    <dbReference type="NCBI Taxonomy" id="315750"/>
    <lineage>
        <taxon>Bacteria</taxon>
        <taxon>Bacillati</taxon>
        <taxon>Bacillota</taxon>
        <taxon>Bacilli</taxon>
        <taxon>Bacillales</taxon>
        <taxon>Bacillaceae</taxon>
        <taxon>Bacillus</taxon>
    </lineage>
</organism>